<protein>
    <recommendedName>
        <fullName>Mannose-binding protein C</fullName>
        <shortName>MBP-C</shortName>
    </recommendedName>
    <alternativeName>
        <fullName>MBP1</fullName>
    </alternativeName>
    <alternativeName>
        <fullName>Mannan-binding protein</fullName>
    </alternativeName>
    <alternativeName>
        <fullName>Mannose-binding lectin</fullName>
    </alternativeName>
</protein>
<gene>
    <name type="primary">MBL2</name>
</gene>
<sequence length="248" mass="26311">MSLFPSLPLLLLSVVATSYSETVTCEDSQKICPAVIACNSPGINGFPGKDGRDGTKGEKGEPGQGLRGLQGPPGKLGPPGNPGPSGSPGPKGQKGDPGESPDCDSSLAASERKALQTEMAHIKKWLTFSLGRQVGNKFFLTNGEMMTFDKVKALCAKFQASVATPRNAAENRAIQNLIKEEAFLGITDENTEGQFVDLIGNRLTYTNWNNGEPNNAGSDEDCVLLLKNGKWNDVPCSSSHLALCEFPI</sequence>
<dbReference type="EMBL" id="AY707519">
    <property type="protein sequence ID" value="AAU11299.1"/>
    <property type="molecule type" value="Genomic_DNA"/>
</dbReference>
<dbReference type="EMBL" id="AY707516">
    <property type="protein sequence ID" value="AAU11299.1"/>
    <property type="status" value="JOINED"/>
    <property type="molecule type" value="Genomic_DNA"/>
</dbReference>
<dbReference type="EMBL" id="AY707517">
    <property type="protein sequence ID" value="AAU11299.1"/>
    <property type="status" value="JOINED"/>
    <property type="molecule type" value="Genomic_DNA"/>
</dbReference>
<dbReference type="EMBL" id="AY707518">
    <property type="protein sequence ID" value="AAU11299.1"/>
    <property type="status" value="JOINED"/>
    <property type="molecule type" value="Genomic_DNA"/>
</dbReference>
<dbReference type="SMR" id="Q66S41"/>
<dbReference type="GO" id="GO:0005581">
    <property type="term" value="C:collagen trimer"/>
    <property type="evidence" value="ECO:0007669"/>
    <property type="project" value="UniProtKB-KW"/>
</dbReference>
<dbReference type="GO" id="GO:0005615">
    <property type="term" value="C:extracellular space"/>
    <property type="evidence" value="ECO:0007669"/>
    <property type="project" value="TreeGrafter"/>
</dbReference>
<dbReference type="GO" id="GO:0005771">
    <property type="term" value="C:multivesicular body"/>
    <property type="evidence" value="ECO:0007669"/>
    <property type="project" value="TreeGrafter"/>
</dbReference>
<dbReference type="GO" id="GO:0005537">
    <property type="term" value="F:D-mannose binding"/>
    <property type="evidence" value="ECO:0007669"/>
    <property type="project" value="UniProtKB-KW"/>
</dbReference>
<dbReference type="GO" id="GO:0006958">
    <property type="term" value="P:complement activation, classical pathway"/>
    <property type="evidence" value="ECO:0007669"/>
    <property type="project" value="UniProtKB-KW"/>
</dbReference>
<dbReference type="GO" id="GO:0001867">
    <property type="term" value="P:complement activation, lectin pathway"/>
    <property type="evidence" value="ECO:0007669"/>
    <property type="project" value="UniProtKB-KW"/>
</dbReference>
<dbReference type="CDD" id="cd03591">
    <property type="entry name" value="CLECT_collectin_like"/>
    <property type="match status" value="1"/>
</dbReference>
<dbReference type="FunFam" id="3.10.100.10:FF:000088">
    <property type="entry name" value="Mannose-binding protein A"/>
    <property type="match status" value="1"/>
</dbReference>
<dbReference type="Gene3D" id="3.10.100.10">
    <property type="entry name" value="Mannose-Binding Protein A, subunit A"/>
    <property type="match status" value="1"/>
</dbReference>
<dbReference type="InterPro" id="IPR001304">
    <property type="entry name" value="C-type_lectin-like"/>
</dbReference>
<dbReference type="InterPro" id="IPR016186">
    <property type="entry name" value="C-type_lectin-like/link_sf"/>
</dbReference>
<dbReference type="InterPro" id="IPR018378">
    <property type="entry name" value="C-type_lectin_CS"/>
</dbReference>
<dbReference type="InterPro" id="IPR051077">
    <property type="entry name" value="Ca-dependent_lectin"/>
</dbReference>
<dbReference type="InterPro" id="IPR008160">
    <property type="entry name" value="Collagen"/>
</dbReference>
<dbReference type="InterPro" id="IPR033990">
    <property type="entry name" value="Collectin_CTLD"/>
</dbReference>
<dbReference type="InterPro" id="IPR016187">
    <property type="entry name" value="CTDL_fold"/>
</dbReference>
<dbReference type="PANTHER" id="PTHR24024:SF34">
    <property type="entry name" value="MANNOSE-BINDING PROTEIN C"/>
    <property type="match status" value="1"/>
</dbReference>
<dbReference type="PANTHER" id="PTHR24024">
    <property type="entry name" value="PULMONARY SURFACTANT-ASSOCIATED PROTEIN A"/>
    <property type="match status" value="1"/>
</dbReference>
<dbReference type="Pfam" id="PF01391">
    <property type="entry name" value="Collagen"/>
    <property type="match status" value="1"/>
</dbReference>
<dbReference type="Pfam" id="PF00059">
    <property type="entry name" value="Lectin_C"/>
    <property type="match status" value="1"/>
</dbReference>
<dbReference type="SMART" id="SM00034">
    <property type="entry name" value="CLECT"/>
    <property type="match status" value="1"/>
</dbReference>
<dbReference type="SUPFAM" id="SSF56436">
    <property type="entry name" value="C-type lectin-like"/>
    <property type="match status" value="1"/>
</dbReference>
<dbReference type="SUPFAM" id="SSF57944">
    <property type="entry name" value="Triple coiled coil domain of C-type lectins"/>
    <property type="match status" value="1"/>
</dbReference>
<dbReference type="PROSITE" id="PS00615">
    <property type="entry name" value="C_TYPE_LECTIN_1"/>
    <property type="match status" value="1"/>
</dbReference>
<dbReference type="PROSITE" id="PS50041">
    <property type="entry name" value="C_TYPE_LECTIN_2"/>
    <property type="match status" value="1"/>
</dbReference>
<keyword id="KW-0106">Calcium</keyword>
<keyword id="KW-0175">Coiled coil</keyword>
<keyword id="KW-0176">Collagen</keyword>
<keyword id="KW-1018">Complement activation lectin pathway</keyword>
<keyword id="KW-0180">Complement pathway</keyword>
<keyword id="KW-1015">Disulfide bond</keyword>
<keyword id="KW-0379">Hydroxylation</keyword>
<keyword id="KW-0391">Immunity</keyword>
<keyword id="KW-0399">Innate immunity</keyword>
<keyword id="KW-0430">Lectin</keyword>
<keyword id="KW-0465">Mannose-binding</keyword>
<keyword id="KW-0677">Repeat</keyword>
<keyword id="KW-0964">Secreted</keyword>
<keyword id="KW-0732">Signal</keyword>
<evidence type="ECO:0000250" key="1"/>
<evidence type="ECO:0000255" key="2">
    <source>
        <dbReference type="PROSITE-ProRule" id="PRU00040"/>
    </source>
</evidence>
<evidence type="ECO:0000256" key="3">
    <source>
        <dbReference type="SAM" id="MobiDB-lite"/>
    </source>
</evidence>
<reference key="1">
    <citation type="journal article" date="2004" name="Genes Immun.">
        <title>Evolution of the mannose-binding lectin gene in primates.</title>
        <authorList>
            <person name="Verga Falzacappa M.V."/>
            <person name="Segat L."/>
            <person name="Puppini B."/>
            <person name="Amoroso A."/>
            <person name="Crovella S."/>
        </authorList>
    </citation>
    <scope>NUCLEOTIDE SEQUENCE [GENOMIC DNA]</scope>
</reference>
<name>MBL2_TRAOB</name>
<comment type="function">
    <text evidence="1">Calcium-dependent lectin involved in innate immune defense. Binds mannose, fucose and N-acetylglucosamine on different microorganisms and activates the lectin complement pathway. Binds to late apoptotic cells, as well as to apoptotic blebs and to necrotic cells, but not to early apoptotic cells, facilitating their uptake by macrophages (By similarity).</text>
</comment>
<comment type="subunit">
    <text evidence="1">Oligomeric complex of 3 or more homotrimers. Interacts with MASP1 and MASP2 (By similarity). Interacts with MEP1A and MEP1B and may inhibit their catalytic activity (By similarity).</text>
</comment>
<comment type="subcellular location">
    <subcellularLocation>
        <location evidence="1">Secreted</location>
    </subcellularLocation>
</comment>
<comment type="domain">
    <text evidence="1">The coiled-coil domain mediates trimerization.</text>
</comment>
<comment type="PTM">
    <text evidence="1">Hydroxylation on proline residues within the sequence motif, GXPG, is most likely to be 4-hydroxy as this fits the requirement for 4-hydroxylation in vertebrates.</text>
</comment>
<accession>Q66S41</accession>
<organism>
    <name type="scientific">Trachypithecus obscurus</name>
    <name type="common">Dusky leaf-monkey</name>
    <name type="synonym">Presbytis obscura</name>
    <dbReference type="NCBI Taxonomy" id="54181"/>
    <lineage>
        <taxon>Eukaryota</taxon>
        <taxon>Metazoa</taxon>
        <taxon>Chordata</taxon>
        <taxon>Craniata</taxon>
        <taxon>Vertebrata</taxon>
        <taxon>Euteleostomi</taxon>
        <taxon>Mammalia</taxon>
        <taxon>Eutheria</taxon>
        <taxon>Euarchontoglires</taxon>
        <taxon>Primates</taxon>
        <taxon>Haplorrhini</taxon>
        <taxon>Catarrhini</taxon>
        <taxon>Cercopithecidae</taxon>
        <taxon>Colobinae</taxon>
        <taxon>Trachypithecus</taxon>
    </lineage>
</organism>
<proteinExistence type="inferred from homology"/>
<feature type="signal peptide" evidence="1">
    <location>
        <begin position="1"/>
        <end position="20"/>
    </location>
</feature>
<feature type="chain" id="PRO_0000017410" description="Mannose-binding protein C">
    <location>
        <begin position="21"/>
        <end position="248"/>
    </location>
</feature>
<feature type="domain" description="Collagen-like">
    <location>
        <begin position="42"/>
        <end position="99"/>
    </location>
</feature>
<feature type="domain" description="C-type lectin" evidence="2">
    <location>
        <begin position="134"/>
        <end position="245"/>
    </location>
</feature>
<feature type="region of interest" description="Disordered" evidence="3">
    <location>
        <begin position="43"/>
        <end position="111"/>
    </location>
</feature>
<feature type="coiled-coil region" evidence="1">
    <location>
        <begin position="112"/>
        <end position="130"/>
    </location>
</feature>
<feature type="compositionally biased region" description="Basic and acidic residues" evidence="3">
    <location>
        <begin position="49"/>
        <end position="61"/>
    </location>
</feature>
<feature type="compositionally biased region" description="Pro residues" evidence="3">
    <location>
        <begin position="75"/>
        <end position="87"/>
    </location>
</feature>
<feature type="modified residue" description="4-hydroxyproline" evidence="1">
    <location>
        <position position="47"/>
    </location>
</feature>
<feature type="modified residue" description="4-hydroxyproline" evidence="1">
    <location>
        <position position="73"/>
    </location>
</feature>
<feature type="modified residue" description="4-hydroxyproline" evidence="1">
    <location>
        <position position="79"/>
    </location>
</feature>
<feature type="modified residue" description="4-hydroxyproline" evidence="1">
    <location>
        <position position="82"/>
    </location>
</feature>
<feature type="modified residue" description="4-hydroxyproline" evidence="1">
    <location>
        <position position="88"/>
    </location>
</feature>
<feature type="disulfide bond" evidence="2">
    <location>
        <begin position="155"/>
        <end position="244"/>
    </location>
</feature>
<feature type="disulfide bond" evidence="2">
    <location>
        <begin position="222"/>
        <end position="236"/>
    </location>
</feature>